<gene>
    <name evidence="4" type="primary">nhaA</name>
    <name type="ordered locus">VP1228</name>
</gene>
<feature type="chain" id="PRO_0000334460" description="Na(+)/H(+) antiporter NhaA">
    <location>
        <begin position="1"/>
        <end position="383"/>
    </location>
</feature>
<feature type="transmembrane region" description="Helical" evidence="1">
    <location>
        <begin position="14"/>
        <end position="34"/>
    </location>
</feature>
<feature type="transmembrane region" description="Helical" evidence="1">
    <location>
        <begin position="47"/>
        <end position="67"/>
    </location>
</feature>
<feature type="transmembrane region" description="Helical" evidence="1">
    <location>
        <begin position="87"/>
        <end position="107"/>
    </location>
</feature>
<feature type="transmembrane region" description="Helical" evidence="1">
    <location>
        <begin position="117"/>
        <end position="137"/>
    </location>
</feature>
<feature type="transmembrane region" description="Helical" evidence="1">
    <location>
        <begin position="146"/>
        <end position="166"/>
    </location>
</feature>
<feature type="transmembrane region" description="Helical" evidence="1">
    <location>
        <begin position="171"/>
        <end position="191"/>
    </location>
</feature>
<feature type="transmembrane region" description="Helical" evidence="1">
    <location>
        <begin position="205"/>
        <end position="225"/>
    </location>
</feature>
<feature type="transmembrane region" description="Helical" evidence="1">
    <location>
        <begin position="252"/>
        <end position="272"/>
    </location>
</feature>
<feature type="transmembrane region" description="Helical" evidence="1">
    <location>
        <begin position="280"/>
        <end position="300"/>
    </location>
</feature>
<feature type="transmembrane region" description="Helical" evidence="1">
    <location>
        <begin position="321"/>
        <end position="341"/>
    </location>
</feature>
<feature type="transmembrane region" description="Helical" evidence="1">
    <location>
        <begin position="356"/>
        <end position="376"/>
    </location>
</feature>
<dbReference type="EMBL" id="D28504">
    <property type="protein sequence ID" value="BAA05864.1"/>
    <property type="molecule type" value="Genomic_DNA"/>
</dbReference>
<dbReference type="EMBL" id="BA000031">
    <property type="protein sequence ID" value="BAC59491.1"/>
    <property type="molecule type" value="Genomic_DNA"/>
</dbReference>
<dbReference type="PIR" id="JX0360">
    <property type="entry name" value="JX0360"/>
</dbReference>
<dbReference type="RefSeq" id="NP_797607.1">
    <property type="nucleotide sequence ID" value="NC_004603.1"/>
</dbReference>
<dbReference type="RefSeq" id="WP_005462393.1">
    <property type="nucleotide sequence ID" value="NC_004603.1"/>
</dbReference>
<dbReference type="SMR" id="Q56725"/>
<dbReference type="TCDB" id="2.A.33.1.2">
    <property type="family name" value="the nhaa na(+):h(+) antiporter (nhaa) family"/>
</dbReference>
<dbReference type="GeneID" id="1188733"/>
<dbReference type="KEGG" id="vpa:VP1228"/>
<dbReference type="PATRIC" id="fig|223926.6.peg.1168"/>
<dbReference type="eggNOG" id="COG3004">
    <property type="taxonomic scope" value="Bacteria"/>
</dbReference>
<dbReference type="HOGENOM" id="CLU_015803_1_0_6"/>
<dbReference type="Proteomes" id="UP000002493">
    <property type="component" value="Chromosome 1"/>
</dbReference>
<dbReference type="GO" id="GO:0005886">
    <property type="term" value="C:plasma membrane"/>
    <property type="evidence" value="ECO:0007669"/>
    <property type="project" value="UniProtKB-SubCell"/>
</dbReference>
<dbReference type="GO" id="GO:0015385">
    <property type="term" value="F:sodium:proton antiporter activity"/>
    <property type="evidence" value="ECO:0007669"/>
    <property type="project" value="TreeGrafter"/>
</dbReference>
<dbReference type="GO" id="GO:0006885">
    <property type="term" value="P:regulation of pH"/>
    <property type="evidence" value="ECO:0007669"/>
    <property type="project" value="InterPro"/>
</dbReference>
<dbReference type="Gene3D" id="1.20.1530.10">
    <property type="entry name" value="Na+/H+ antiporter like domain"/>
    <property type="match status" value="1"/>
</dbReference>
<dbReference type="HAMAP" id="MF_01844">
    <property type="entry name" value="NhaA"/>
    <property type="match status" value="1"/>
</dbReference>
<dbReference type="InterPro" id="IPR023171">
    <property type="entry name" value="Na/H_antiporter_dom_sf"/>
</dbReference>
<dbReference type="InterPro" id="IPR004670">
    <property type="entry name" value="NhaA"/>
</dbReference>
<dbReference type="NCBIfam" id="TIGR00773">
    <property type="entry name" value="NhaA"/>
    <property type="match status" value="1"/>
</dbReference>
<dbReference type="NCBIfam" id="NF007111">
    <property type="entry name" value="PRK09560.1"/>
    <property type="match status" value="1"/>
</dbReference>
<dbReference type="NCBIfam" id="NF007112">
    <property type="entry name" value="PRK09561.1"/>
    <property type="match status" value="1"/>
</dbReference>
<dbReference type="PANTHER" id="PTHR30341:SF0">
    <property type="entry name" value="NA(+)_H(+) ANTIPORTER NHAA"/>
    <property type="match status" value="1"/>
</dbReference>
<dbReference type="PANTHER" id="PTHR30341">
    <property type="entry name" value="SODIUM ION/PROTON ANTIPORTER NHAA-RELATED"/>
    <property type="match status" value="1"/>
</dbReference>
<dbReference type="Pfam" id="PF06965">
    <property type="entry name" value="Na_H_antiport_1"/>
    <property type="match status" value="1"/>
</dbReference>
<evidence type="ECO:0000255" key="1">
    <source>
        <dbReference type="HAMAP-Rule" id="MF_01844"/>
    </source>
</evidence>
<evidence type="ECO:0000269" key="2">
    <source>
    </source>
</evidence>
<evidence type="ECO:0000269" key="3">
    <source>
    </source>
</evidence>
<evidence type="ECO:0000303" key="4">
    <source>
    </source>
</evidence>
<evidence type="ECO:0000305" key="5"/>
<evidence type="ECO:0000305" key="6">
    <source>
    </source>
</evidence>
<proteinExistence type="evidence at protein level"/>
<sequence length="383" mass="40433">MNDVIRDFFKMESAGGILLVIAAAIAMTIANSPLGETYQSLLHTYVFGMSVSHWINDGLMAVFFLLIGLEVKRELLEGALKSKETAIFPAIAAVGGMLAPALIYVAFNANDPEAISGWAIPAATDIAFALGIMALLGKRVPVSLKVFLLALAIIDDLGVVVIIALFYTGDLSSMALLVGFVMTGVLFMLNAKEVTKLTPYMIVGAILWFAVLKSGVHATLAGVVIGFAIPLKGKQGEHSPLKHMEHALHPYVAFGILPLFAFANAGISLEGVSMSGLTSMLPLGIALGLLIGKPLGIFSFSWAAVKLGVAKLPEGINFKHIFAVSVLCGIGFTMSIFISSLAFGNVSPEFDTYARLGILMGSTTAAVLGYALLHFSLPKKAQD</sequence>
<protein>
    <recommendedName>
        <fullName evidence="4">Na(+)/H(+) antiporter NhaA</fullName>
    </recommendedName>
    <alternativeName>
        <fullName evidence="1">Sodium/proton antiporter NhaA</fullName>
    </alternativeName>
</protein>
<comment type="function">
    <text evidence="2 3">Na(+)/H(+) antiporter that extrudes sodium in exchange for external protons (PubMed:16390457, PubMed:7896730). Can also transport lithium and potassium (PubMed:16390457, PubMed:7896730).</text>
</comment>
<comment type="catalytic activity">
    <reaction evidence="1">
        <text>Na(+)(in) + 2 H(+)(out) = Na(+)(out) + 2 H(+)(in)</text>
        <dbReference type="Rhea" id="RHEA:29251"/>
        <dbReference type="ChEBI" id="CHEBI:15378"/>
        <dbReference type="ChEBI" id="CHEBI:29101"/>
    </reaction>
    <physiologicalReaction direction="left-to-right" evidence="1">
        <dbReference type="Rhea" id="RHEA:29252"/>
    </physiologicalReaction>
</comment>
<comment type="catalytic activity">
    <reaction evidence="6">
        <text>Li(+)(in) + 2 H(+)(out) = Li(+)(out) + 2 H(+)(in)</text>
        <dbReference type="Rhea" id="RHEA:70431"/>
        <dbReference type="ChEBI" id="CHEBI:15378"/>
        <dbReference type="ChEBI" id="CHEBI:49713"/>
    </reaction>
    <physiologicalReaction direction="left-to-right" evidence="6">
        <dbReference type="Rhea" id="RHEA:70432"/>
    </physiologicalReaction>
</comment>
<comment type="activity regulation">
    <text evidence="3">Activity is regulated by pH (PubMed:7896730). Active at alkaline pH (PubMed:7896730). Amiloride strongly reduces affinity for Na(+), but does not change the Vmax (PubMed:7896730).</text>
</comment>
<comment type="biophysicochemical properties">
    <kinetics>
        <KM evidence="3">36 mM for Na(+)</KM>
        <KM evidence="3">24 mM for Li(+)</KM>
    </kinetics>
    <phDependence>
        <text evidence="3">Optimum pH is 8.5. Activity is null at pH 7.0 and increases as the pH increases from 7.0 to 8.5.</text>
    </phDependence>
</comment>
<comment type="subcellular location">
    <subcellularLocation>
        <location evidence="2">Cell inner membrane</location>
        <topology evidence="1">Multi-pass membrane protein</topology>
    </subcellularLocation>
</comment>
<comment type="similarity">
    <text evidence="1 5">Belongs to the NhaA Na(+)/H(+) (TC 2.A.33) antiporter family.</text>
</comment>
<accession>Q56725</accession>
<organism>
    <name type="scientific">Vibrio parahaemolyticus serotype O3:K6 (strain RIMD 2210633)</name>
    <dbReference type="NCBI Taxonomy" id="223926"/>
    <lineage>
        <taxon>Bacteria</taxon>
        <taxon>Pseudomonadati</taxon>
        <taxon>Pseudomonadota</taxon>
        <taxon>Gammaproteobacteria</taxon>
        <taxon>Vibrionales</taxon>
        <taxon>Vibrionaceae</taxon>
        <taxon>Vibrio</taxon>
    </lineage>
</organism>
<keyword id="KW-0050">Antiport</keyword>
<keyword id="KW-0997">Cell inner membrane</keyword>
<keyword id="KW-1003">Cell membrane</keyword>
<keyword id="KW-0406">Ion transport</keyword>
<keyword id="KW-0472">Membrane</keyword>
<keyword id="KW-0915">Sodium</keyword>
<keyword id="KW-0739">Sodium transport</keyword>
<keyword id="KW-0812">Transmembrane</keyword>
<keyword id="KW-1133">Transmembrane helix</keyword>
<keyword id="KW-0813">Transport</keyword>
<name>NHAA_VIBPA</name>
<reference key="1">
    <citation type="journal article" date="1994" name="J. Biochem.">
        <title>Properties and sequence of the NhaA Na+/H+ antiporter of Vibrio parahaemolyticus.</title>
        <authorList>
            <person name="Kuroda T."/>
            <person name="Shimamoto T."/>
            <person name="Inaba K."/>
            <person name="Tsuda M."/>
            <person name="Tsuchiya T."/>
        </authorList>
    </citation>
    <scope>NUCLEOTIDE SEQUENCE [GENOMIC DNA]</scope>
    <scope>FUNCTION</scope>
    <scope>ACTIVITY REGULATION</scope>
    <scope>BIOPHYSICOCHEMICAL PROPERTIES</scope>
    <source>
        <strain>AQ3334</strain>
    </source>
</reference>
<reference key="2">
    <citation type="journal article" date="2003" name="Lancet">
        <title>Genome sequence of Vibrio parahaemolyticus: a pathogenic mechanism distinct from that of V. cholerae.</title>
        <authorList>
            <person name="Makino K."/>
            <person name="Oshima K."/>
            <person name="Kurokawa K."/>
            <person name="Yokoyama K."/>
            <person name="Uda T."/>
            <person name="Tagomori K."/>
            <person name="Iijima Y."/>
            <person name="Najima M."/>
            <person name="Nakano M."/>
            <person name="Yamashita A."/>
            <person name="Kubota Y."/>
            <person name="Kimura S."/>
            <person name="Yasunaga T."/>
            <person name="Honda T."/>
            <person name="Shinagawa H."/>
            <person name="Hattori M."/>
            <person name="Iida T."/>
        </authorList>
    </citation>
    <scope>NUCLEOTIDE SEQUENCE [LARGE SCALE GENOMIC DNA]</scope>
    <source>
        <strain>RIMD 2210633</strain>
    </source>
</reference>
<reference key="3">
    <citation type="journal article" date="2006" name="Mol. Microbiol.">
        <title>Cloning, functional expression and primary characterization of Vibrio parahaemolyticus K+/H+ antiporter genes in Escherichia coli.</title>
        <authorList>
            <person name="Radchenko M.V."/>
            <person name="Waditee R."/>
            <person name="Oshimi S."/>
            <person name="Fukuhara M."/>
            <person name="Takabe T."/>
            <person name="Nakamura T."/>
        </authorList>
    </citation>
    <scope>FUNCTION</scope>
    <scope>SUBCELLULAR LOCATION</scope>
    <source>
        <strain>RIMD 2210633</strain>
    </source>
</reference>